<reference key="1">
    <citation type="journal article" date="2005" name="Nature">
        <title>The DNA sequence of the human X chromosome.</title>
        <authorList>
            <person name="Ross M.T."/>
            <person name="Grafham D.V."/>
            <person name="Coffey A.J."/>
            <person name="Scherer S."/>
            <person name="McLay K."/>
            <person name="Muzny D."/>
            <person name="Platzer M."/>
            <person name="Howell G.R."/>
            <person name="Burrows C."/>
            <person name="Bird C.P."/>
            <person name="Frankish A."/>
            <person name="Lovell F.L."/>
            <person name="Howe K.L."/>
            <person name="Ashurst J.L."/>
            <person name="Fulton R.S."/>
            <person name="Sudbrak R."/>
            <person name="Wen G."/>
            <person name="Jones M.C."/>
            <person name="Hurles M.E."/>
            <person name="Andrews T.D."/>
            <person name="Scott C.E."/>
            <person name="Searle S."/>
            <person name="Ramser J."/>
            <person name="Whittaker A."/>
            <person name="Deadman R."/>
            <person name="Carter N.P."/>
            <person name="Hunt S.E."/>
            <person name="Chen R."/>
            <person name="Cree A."/>
            <person name="Gunaratne P."/>
            <person name="Havlak P."/>
            <person name="Hodgson A."/>
            <person name="Metzker M.L."/>
            <person name="Richards S."/>
            <person name="Scott G."/>
            <person name="Steffen D."/>
            <person name="Sodergren E."/>
            <person name="Wheeler D.A."/>
            <person name="Worley K.C."/>
            <person name="Ainscough R."/>
            <person name="Ambrose K.D."/>
            <person name="Ansari-Lari M.A."/>
            <person name="Aradhya S."/>
            <person name="Ashwell R.I."/>
            <person name="Babbage A.K."/>
            <person name="Bagguley C.L."/>
            <person name="Ballabio A."/>
            <person name="Banerjee R."/>
            <person name="Barker G.E."/>
            <person name="Barlow K.F."/>
            <person name="Barrett I.P."/>
            <person name="Bates K.N."/>
            <person name="Beare D.M."/>
            <person name="Beasley H."/>
            <person name="Beasley O."/>
            <person name="Beck A."/>
            <person name="Bethel G."/>
            <person name="Blechschmidt K."/>
            <person name="Brady N."/>
            <person name="Bray-Allen S."/>
            <person name="Bridgeman A.M."/>
            <person name="Brown A.J."/>
            <person name="Brown M.J."/>
            <person name="Bonnin D."/>
            <person name="Bruford E.A."/>
            <person name="Buhay C."/>
            <person name="Burch P."/>
            <person name="Burford D."/>
            <person name="Burgess J."/>
            <person name="Burrill W."/>
            <person name="Burton J."/>
            <person name="Bye J.M."/>
            <person name="Carder C."/>
            <person name="Carrel L."/>
            <person name="Chako J."/>
            <person name="Chapman J.C."/>
            <person name="Chavez D."/>
            <person name="Chen E."/>
            <person name="Chen G."/>
            <person name="Chen Y."/>
            <person name="Chen Z."/>
            <person name="Chinault C."/>
            <person name="Ciccodicola A."/>
            <person name="Clark S.Y."/>
            <person name="Clarke G."/>
            <person name="Clee C.M."/>
            <person name="Clegg S."/>
            <person name="Clerc-Blankenburg K."/>
            <person name="Clifford K."/>
            <person name="Cobley V."/>
            <person name="Cole C.G."/>
            <person name="Conquer J.S."/>
            <person name="Corby N."/>
            <person name="Connor R.E."/>
            <person name="David R."/>
            <person name="Davies J."/>
            <person name="Davis C."/>
            <person name="Davis J."/>
            <person name="Delgado O."/>
            <person name="Deshazo D."/>
            <person name="Dhami P."/>
            <person name="Ding Y."/>
            <person name="Dinh H."/>
            <person name="Dodsworth S."/>
            <person name="Draper H."/>
            <person name="Dugan-Rocha S."/>
            <person name="Dunham A."/>
            <person name="Dunn M."/>
            <person name="Durbin K.J."/>
            <person name="Dutta I."/>
            <person name="Eades T."/>
            <person name="Ellwood M."/>
            <person name="Emery-Cohen A."/>
            <person name="Errington H."/>
            <person name="Evans K.L."/>
            <person name="Faulkner L."/>
            <person name="Francis F."/>
            <person name="Frankland J."/>
            <person name="Fraser A.E."/>
            <person name="Galgoczy P."/>
            <person name="Gilbert J."/>
            <person name="Gill R."/>
            <person name="Gloeckner G."/>
            <person name="Gregory S.G."/>
            <person name="Gribble S."/>
            <person name="Griffiths C."/>
            <person name="Grocock R."/>
            <person name="Gu Y."/>
            <person name="Gwilliam R."/>
            <person name="Hamilton C."/>
            <person name="Hart E.A."/>
            <person name="Hawes A."/>
            <person name="Heath P.D."/>
            <person name="Heitmann K."/>
            <person name="Hennig S."/>
            <person name="Hernandez J."/>
            <person name="Hinzmann B."/>
            <person name="Ho S."/>
            <person name="Hoffs M."/>
            <person name="Howden P.J."/>
            <person name="Huckle E.J."/>
            <person name="Hume J."/>
            <person name="Hunt P.J."/>
            <person name="Hunt A.R."/>
            <person name="Isherwood J."/>
            <person name="Jacob L."/>
            <person name="Johnson D."/>
            <person name="Jones S."/>
            <person name="de Jong P.J."/>
            <person name="Joseph S.S."/>
            <person name="Keenan S."/>
            <person name="Kelly S."/>
            <person name="Kershaw J.K."/>
            <person name="Khan Z."/>
            <person name="Kioschis P."/>
            <person name="Klages S."/>
            <person name="Knights A.J."/>
            <person name="Kosiura A."/>
            <person name="Kovar-Smith C."/>
            <person name="Laird G.K."/>
            <person name="Langford C."/>
            <person name="Lawlor S."/>
            <person name="Leversha M."/>
            <person name="Lewis L."/>
            <person name="Liu W."/>
            <person name="Lloyd C."/>
            <person name="Lloyd D.M."/>
            <person name="Loulseged H."/>
            <person name="Loveland J.E."/>
            <person name="Lovell J.D."/>
            <person name="Lozado R."/>
            <person name="Lu J."/>
            <person name="Lyne R."/>
            <person name="Ma J."/>
            <person name="Maheshwari M."/>
            <person name="Matthews L.H."/>
            <person name="McDowall J."/>
            <person name="McLaren S."/>
            <person name="McMurray A."/>
            <person name="Meidl P."/>
            <person name="Meitinger T."/>
            <person name="Milne S."/>
            <person name="Miner G."/>
            <person name="Mistry S.L."/>
            <person name="Morgan M."/>
            <person name="Morris S."/>
            <person name="Mueller I."/>
            <person name="Mullikin J.C."/>
            <person name="Nguyen N."/>
            <person name="Nordsiek G."/>
            <person name="Nyakatura G."/>
            <person name="O'dell C.N."/>
            <person name="Okwuonu G."/>
            <person name="Palmer S."/>
            <person name="Pandian R."/>
            <person name="Parker D."/>
            <person name="Parrish J."/>
            <person name="Pasternak S."/>
            <person name="Patel D."/>
            <person name="Pearce A.V."/>
            <person name="Pearson D.M."/>
            <person name="Pelan S.E."/>
            <person name="Perez L."/>
            <person name="Porter K.M."/>
            <person name="Ramsey Y."/>
            <person name="Reichwald K."/>
            <person name="Rhodes S."/>
            <person name="Ridler K.A."/>
            <person name="Schlessinger D."/>
            <person name="Schueler M.G."/>
            <person name="Sehra H.K."/>
            <person name="Shaw-Smith C."/>
            <person name="Shen H."/>
            <person name="Sheridan E.M."/>
            <person name="Shownkeen R."/>
            <person name="Skuce C.D."/>
            <person name="Smith M.L."/>
            <person name="Sotheran E.C."/>
            <person name="Steingruber H.E."/>
            <person name="Steward C.A."/>
            <person name="Storey R."/>
            <person name="Swann R.M."/>
            <person name="Swarbreck D."/>
            <person name="Tabor P.E."/>
            <person name="Taudien S."/>
            <person name="Taylor T."/>
            <person name="Teague B."/>
            <person name="Thomas K."/>
            <person name="Thorpe A."/>
            <person name="Timms K."/>
            <person name="Tracey A."/>
            <person name="Trevanion S."/>
            <person name="Tromans A.C."/>
            <person name="d'Urso M."/>
            <person name="Verduzco D."/>
            <person name="Villasana D."/>
            <person name="Waldron L."/>
            <person name="Wall M."/>
            <person name="Wang Q."/>
            <person name="Warren J."/>
            <person name="Warry G.L."/>
            <person name="Wei X."/>
            <person name="West A."/>
            <person name="Whitehead S.L."/>
            <person name="Whiteley M.N."/>
            <person name="Wilkinson J.E."/>
            <person name="Willey D.L."/>
            <person name="Williams G."/>
            <person name="Williams L."/>
            <person name="Williamson A."/>
            <person name="Williamson H."/>
            <person name="Wilming L."/>
            <person name="Woodmansey R.L."/>
            <person name="Wray P.W."/>
            <person name="Yen J."/>
            <person name="Zhang J."/>
            <person name="Zhou J."/>
            <person name="Zoghbi H."/>
            <person name="Zorilla S."/>
            <person name="Buck D."/>
            <person name="Reinhardt R."/>
            <person name="Poustka A."/>
            <person name="Rosenthal A."/>
            <person name="Lehrach H."/>
            <person name="Meindl A."/>
            <person name="Minx P.J."/>
            <person name="Hillier L.W."/>
            <person name="Willard H.F."/>
            <person name="Wilson R.K."/>
            <person name="Waterston R.H."/>
            <person name="Rice C.M."/>
            <person name="Vaudin M."/>
            <person name="Coulson A."/>
            <person name="Nelson D.L."/>
            <person name="Weinstock G."/>
            <person name="Sulston J.E."/>
            <person name="Durbin R.M."/>
            <person name="Hubbard T."/>
            <person name="Gibbs R.A."/>
            <person name="Beck S."/>
            <person name="Rogers J."/>
            <person name="Bentley D.R."/>
        </authorList>
    </citation>
    <scope>NUCLEOTIDE SEQUENCE [LARGE SCALE GENOMIC DNA]</scope>
</reference>
<reference key="2">
    <citation type="submission" date="2005-09" db="EMBL/GenBank/DDBJ databases">
        <authorList>
            <person name="Mural R.J."/>
            <person name="Istrail S."/>
            <person name="Sutton G.G."/>
            <person name="Florea L."/>
            <person name="Halpern A.L."/>
            <person name="Mobarry C.M."/>
            <person name="Lippert R."/>
            <person name="Walenz B."/>
            <person name="Shatkay H."/>
            <person name="Dew I."/>
            <person name="Miller J.R."/>
            <person name="Flanigan M.J."/>
            <person name="Edwards N.J."/>
            <person name="Bolanos R."/>
            <person name="Fasulo D."/>
            <person name="Halldorsson B.V."/>
            <person name="Hannenhalli S."/>
            <person name="Turner R."/>
            <person name="Yooseph S."/>
            <person name="Lu F."/>
            <person name="Nusskern D.R."/>
            <person name="Shue B.C."/>
            <person name="Zheng X.H."/>
            <person name="Zhong F."/>
            <person name="Delcher A.L."/>
            <person name="Huson D.H."/>
            <person name="Kravitz S.A."/>
            <person name="Mouchard L."/>
            <person name="Reinert K."/>
            <person name="Remington K.A."/>
            <person name="Clark A.G."/>
            <person name="Waterman M.S."/>
            <person name="Eichler E.E."/>
            <person name="Adams M.D."/>
            <person name="Hunkapiller M.W."/>
            <person name="Myers E.W."/>
            <person name="Venter J.C."/>
        </authorList>
    </citation>
    <scope>NUCLEOTIDE SEQUENCE [LARGE SCALE GENOMIC DNA]</scope>
</reference>
<reference key="3">
    <citation type="journal article" date="2004" name="Genome Res.">
        <title>The status, quality, and expansion of the NIH full-length cDNA project: the Mammalian Gene Collection (MGC).</title>
        <authorList>
            <consortium name="The MGC Project Team"/>
        </authorList>
    </citation>
    <scope>NUCLEOTIDE SEQUENCE [LARGE SCALE MRNA]</scope>
    <source>
        <tissue>Brain</tissue>
    </source>
</reference>
<keyword id="KW-1267">Proteomics identification</keyword>
<keyword id="KW-1185">Reference proteome</keyword>
<keyword id="KW-0677">Repeat</keyword>
<keyword id="KW-0694">RNA-binding</keyword>
<sequence>MASLYVGDLHPEVTEAMLYEKFSPAGPILSIRICRDKITRRSLGYAYVNYQQPVDAKRALETLNFDVIKGRPVRIMWSQRDPSLRKSGVGNVFIKNLGKTIDNKALYNIFSAFGNILSCKVACDEKGPKGYGFVHFQKQESAERAIDVMNGMFLNYRKIFVGRFKSHKEREAERGAWARQSTSADVKDFEEDTDEEATLR</sequence>
<comment type="miscellaneous">
    <text>May be not functional as it lacks the poly(A)-binding protein C-terminal (PABC) domain implicated in the mRNA stability and translation regulation.</text>
</comment>
<comment type="sequence caution" evidence="3">
    <conflict type="erroneous initiation">
        <sequence resource="EMBL-CDS" id="AAH41956"/>
    </conflict>
</comment>
<organism>
    <name type="scientific">Homo sapiens</name>
    <name type="common">Human</name>
    <dbReference type="NCBI Taxonomy" id="9606"/>
    <lineage>
        <taxon>Eukaryota</taxon>
        <taxon>Metazoa</taxon>
        <taxon>Chordata</taxon>
        <taxon>Craniata</taxon>
        <taxon>Vertebrata</taxon>
        <taxon>Euteleostomi</taxon>
        <taxon>Mammalia</taxon>
        <taxon>Eutheria</taxon>
        <taxon>Euarchontoglires</taxon>
        <taxon>Primates</taxon>
        <taxon>Haplorrhini</taxon>
        <taxon>Catarrhini</taxon>
        <taxon>Hominidae</taxon>
        <taxon>Homo</taxon>
    </lineage>
</organism>
<gene>
    <name type="primary">PABPC1L2A</name>
    <name type="synonym">PABPC1L2</name>
    <name type="synonym">RBM32A</name>
</gene>
<gene>
    <name type="primary">PABPC1L2B</name>
    <name type="synonym">PABPC1L2</name>
    <name type="synonym">RBM32B</name>
</gene>
<accession>Q5JQF8</accession>
<accession>B2RMV9</accession>
<accession>Q8IVU8</accession>
<feature type="chain" id="PRO_0000304509" description="Polyadenylate-binding protein 1-like 2">
    <location>
        <begin position="1"/>
        <end position="200"/>
    </location>
</feature>
<feature type="domain" description="RRM 1" evidence="1">
    <location>
        <begin position="2"/>
        <end position="80"/>
    </location>
</feature>
<feature type="domain" description="RRM 2" evidence="1">
    <location>
        <begin position="90"/>
        <end position="166"/>
    </location>
</feature>
<feature type="region of interest" description="Disordered" evidence="2">
    <location>
        <begin position="170"/>
        <end position="200"/>
    </location>
</feature>
<feature type="compositionally biased region" description="Acidic residues" evidence="2">
    <location>
        <begin position="188"/>
        <end position="200"/>
    </location>
</feature>
<feature type="sequence conflict" description="In Ref. 3; AAH41956." evidence="3" ref="3">
    <original>R</original>
    <variation>S</variation>
    <location>
        <position position="32"/>
    </location>
</feature>
<evidence type="ECO:0000255" key="1">
    <source>
        <dbReference type="PROSITE-ProRule" id="PRU00176"/>
    </source>
</evidence>
<evidence type="ECO:0000256" key="2">
    <source>
        <dbReference type="SAM" id="MobiDB-lite"/>
    </source>
</evidence>
<evidence type="ECO:0000305" key="3"/>
<dbReference type="EMBL" id="AL662864">
    <property type="status" value="NOT_ANNOTATED_CDS"/>
    <property type="molecule type" value="Genomic_DNA"/>
</dbReference>
<dbReference type="EMBL" id="CH471104">
    <property type="protein sequence ID" value="EAW98671.1"/>
    <property type="molecule type" value="Genomic_DNA"/>
</dbReference>
<dbReference type="EMBL" id="BC041956">
    <property type="protein sequence ID" value="AAH41956.1"/>
    <property type="status" value="ALT_INIT"/>
    <property type="molecule type" value="mRNA"/>
</dbReference>
<dbReference type="EMBL" id="BC136492">
    <property type="protein sequence ID" value="AAI36493.1"/>
    <property type="molecule type" value="mRNA"/>
</dbReference>
<dbReference type="CCDS" id="CCDS35334.1"/>
<dbReference type="CCDS" id="CCDS43972.1"/>
<dbReference type="RefSeq" id="NP_001012995.1">
    <property type="nucleotide sequence ID" value="NM_001012977.3"/>
</dbReference>
<dbReference type="RefSeq" id="NP_001035971.1">
    <property type="nucleotide sequence ID" value="NM_001042506.1"/>
</dbReference>
<dbReference type="SMR" id="Q5JQF8"/>
<dbReference type="BioGRID" id="131067">
    <property type="interactions" value="12"/>
</dbReference>
<dbReference type="FunCoup" id="Q5JQF8">
    <property type="interactions" value="195"/>
</dbReference>
<dbReference type="IntAct" id="Q5JQF8">
    <property type="interactions" value="4"/>
</dbReference>
<dbReference type="MINT" id="Q5JQF8"/>
<dbReference type="STRING" id="9606.ENSP00000362618"/>
<dbReference type="iPTMnet" id="Q5JQF8"/>
<dbReference type="PhosphoSitePlus" id="Q5JQF8"/>
<dbReference type="BioMuta" id="PABPC1L2A"/>
<dbReference type="DMDM" id="74755614"/>
<dbReference type="jPOST" id="Q5JQF8"/>
<dbReference type="MassIVE" id="Q5JQF8"/>
<dbReference type="PaxDb" id="9606-ENSP00000362618"/>
<dbReference type="PeptideAtlas" id="Q5JQF8"/>
<dbReference type="ProteomicsDB" id="63045"/>
<dbReference type="Antibodypedia" id="27980">
    <property type="antibodies" value="26 antibodies from 7 providers"/>
</dbReference>
<dbReference type="Antibodypedia" id="72608">
    <property type="antibodies" value="50 antibodies from 11 providers"/>
</dbReference>
<dbReference type="DNASU" id="340529"/>
<dbReference type="Ensembl" id="ENST00000373519.1">
    <property type="protein sequence ID" value="ENSP00000362618.1"/>
    <property type="gene ID" value="ENSG00000186288.5"/>
</dbReference>
<dbReference type="Ensembl" id="ENST00000373521.4">
    <property type="protein sequence ID" value="ENSP00000362621.3"/>
    <property type="gene ID" value="ENSG00000184388.6"/>
</dbReference>
<dbReference type="GeneID" id="340529"/>
<dbReference type="GeneID" id="645974"/>
<dbReference type="KEGG" id="hsa:340529"/>
<dbReference type="KEGG" id="hsa:645974"/>
<dbReference type="MANE-Select" id="ENST00000373519.1">
    <property type="protein sequence ID" value="ENSP00000362618.1"/>
    <property type="RefSeq nucleotide sequence ID" value="NM_001012977.3"/>
    <property type="RefSeq protein sequence ID" value="NP_001012995.1"/>
</dbReference>
<dbReference type="MANE-Select" id="ENST00000373521.4">
    <property type="protein sequence ID" value="ENSP00000362621.3"/>
    <property type="RefSeq nucleotide sequence ID" value="NM_001042506.2"/>
    <property type="RefSeq protein sequence ID" value="NP_001035971.1"/>
</dbReference>
<dbReference type="UCSC" id="uc004ebf.4">
    <property type="organism name" value="human"/>
</dbReference>
<dbReference type="AGR" id="HGNC:27989"/>
<dbReference type="AGR" id="HGNC:31852"/>
<dbReference type="CTD" id="340529"/>
<dbReference type="CTD" id="645974"/>
<dbReference type="DisGeNET" id="645974"/>
<dbReference type="GeneCards" id="PABPC1L2A"/>
<dbReference type="GeneCards" id="PABPC1L2B"/>
<dbReference type="HGNC" id="HGNC:27989">
    <property type="gene designation" value="PABPC1L2A"/>
</dbReference>
<dbReference type="HGNC" id="HGNC:31852">
    <property type="gene designation" value="PABPC1L2B"/>
</dbReference>
<dbReference type="HPA" id="ENSG00000184388">
    <property type="expression patterns" value="Tissue enriched (brain)"/>
</dbReference>
<dbReference type="HPA" id="ENSG00000186288">
    <property type="expression patterns" value="Tissue enhanced (brain)"/>
</dbReference>
<dbReference type="neXtProt" id="NX_Q5JQF8"/>
<dbReference type="OpenTargets" id="ENSG00000184388"/>
<dbReference type="OpenTargets" id="ENSG00000186288"/>
<dbReference type="PharmGKB" id="PA162398594"/>
<dbReference type="VEuPathDB" id="HostDB:ENSG00000184388"/>
<dbReference type="VEuPathDB" id="HostDB:ENSG00000186288"/>
<dbReference type="eggNOG" id="KOG0123">
    <property type="taxonomic scope" value="Eukaryota"/>
</dbReference>
<dbReference type="GeneTree" id="ENSGT00940000160311"/>
<dbReference type="HOGENOM" id="CLU_012062_22_1_1"/>
<dbReference type="InParanoid" id="Q5JQF8"/>
<dbReference type="OMA" id="IVWELMI"/>
<dbReference type="OrthoDB" id="19742at2759"/>
<dbReference type="PAN-GO" id="Q5JQF8">
    <property type="GO annotations" value="0 GO annotations based on evolutionary models"/>
</dbReference>
<dbReference type="PhylomeDB" id="Q5JQF8"/>
<dbReference type="PathwayCommons" id="Q5JQF8"/>
<dbReference type="BioGRID-ORCS" id="340529">
    <property type="hits" value="10 hits in 626 CRISPR screens"/>
</dbReference>
<dbReference type="BioGRID-ORCS" id="645974">
    <property type="hits" value="24 hits in 641 CRISPR screens"/>
</dbReference>
<dbReference type="CD-CODE" id="DEE660B4">
    <property type="entry name" value="Stress granule"/>
</dbReference>
<dbReference type="Pharos" id="Q5JQF8">
    <property type="development level" value="Tdark"/>
</dbReference>
<dbReference type="PRO" id="PR:Q5JQF8"/>
<dbReference type="Proteomes" id="UP000005640">
    <property type="component" value="Chromosome X"/>
</dbReference>
<dbReference type="RNAct" id="Q5JQF8">
    <property type="molecule type" value="protein"/>
</dbReference>
<dbReference type="Bgee" id="ENSG00000184388">
    <property type="expression patterns" value="Expressed in endothelial cell and 41 other cell types or tissues"/>
</dbReference>
<dbReference type="GO" id="GO:0010494">
    <property type="term" value="C:cytoplasmic stress granule"/>
    <property type="evidence" value="ECO:0000318"/>
    <property type="project" value="GO_Central"/>
</dbReference>
<dbReference type="GO" id="GO:0005829">
    <property type="term" value="C:cytosol"/>
    <property type="evidence" value="ECO:0000318"/>
    <property type="project" value="GO_Central"/>
</dbReference>
<dbReference type="GO" id="GO:0070062">
    <property type="term" value="C:extracellular exosome"/>
    <property type="evidence" value="ECO:0007005"/>
    <property type="project" value="UniProtKB"/>
</dbReference>
<dbReference type="GO" id="GO:0005634">
    <property type="term" value="C:nucleus"/>
    <property type="evidence" value="ECO:0000318"/>
    <property type="project" value="GO_Central"/>
</dbReference>
<dbReference type="GO" id="GO:1990904">
    <property type="term" value="C:ribonucleoprotein complex"/>
    <property type="evidence" value="ECO:0000318"/>
    <property type="project" value="GO_Central"/>
</dbReference>
<dbReference type="GO" id="GO:0003730">
    <property type="term" value="F:mRNA 3'-UTR binding"/>
    <property type="evidence" value="ECO:0000318"/>
    <property type="project" value="GO_Central"/>
</dbReference>
<dbReference type="GO" id="GO:0008143">
    <property type="term" value="F:poly(A) binding"/>
    <property type="evidence" value="ECO:0000318"/>
    <property type="project" value="GO_Central"/>
</dbReference>
<dbReference type="GO" id="GO:0008266">
    <property type="term" value="F:poly(U) RNA binding"/>
    <property type="evidence" value="ECO:0000318"/>
    <property type="project" value="GO_Central"/>
</dbReference>
<dbReference type="CDD" id="cd12378">
    <property type="entry name" value="RRM1_I_PABPs"/>
    <property type="match status" value="1"/>
</dbReference>
<dbReference type="CDD" id="cd12379">
    <property type="entry name" value="RRM2_I_PABPs"/>
    <property type="match status" value="1"/>
</dbReference>
<dbReference type="FunFam" id="3.30.70.330:FF:000003">
    <property type="entry name" value="Polyadenylate-binding protein"/>
    <property type="match status" value="1"/>
</dbReference>
<dbReference type="FunFam" id="3.30.70.330:FF:000021">
    <property type="entry name" value="Polyadenylate-binding protein"/>
    <property type="match status" value="1"/>
</dbReference>
<dbReference type="Gene3D" id="3.30.70.330">
    <property type="match status" value="2"/>
</dbReference>
<dbReference type="InterPro" id="IPR012677">
    <property type="entry name" value="Nucleotide-bd_a/b_plait_sf"/>
</dbReference>
<dbReference type="InterPro" id="IPR034364">
    <property type="entry name" value="PABP_RRM1"/>
</dbReference>
<dbReference type="InterPro" id="IPR035979">
    <property type="entry name" value="RBD_domain_sf"/>
</dbReference>
<dbReference type="InterPro" id="IPR045305">
    <property type="entry name" value="RRM2_I_PABPs"/>
</dbReference>
<dbReference type="InterPro" id="IPR000504">
    <property type="entry name" value="RRM_dom"/>
</dbReference>
<dbReference type="PANTHER" id="PTHR24012">
    <property type="entry name" value="RNA BINDING PROTEIN"/>
    <property type="match status" value="1"/>
</dbReference>
<dbReference type="Pfam" id="PF00076">
    <property type="entry name" value="RRM_1"/>
    <property type="match status" value="2"/>
</dbReference>
<dbReference type="SMART" id="SM00360">
    <property type="entry name" value="RRM"/>
    <property type="match status" value="2"/>
</dbReference>
<dbReference type="SUPFAM" id="SSF54928">
    <property type="entry name" value="RNA-binding domain, RBD"/>
    <property type="match status" value="1"/>
</dbReference>
<dbReference type="PROSITE" id="PS50102">
    <property type="entry name" value="RRM"/>
    <property type="match status" value="2"/>
</dbReference>
<proteinExistence type="evidence at protein level"/>
<protein>
    <recommendedName>
        <fullName>Polyadenylate-binding protein 1-like 2</fullName>
    </recommendedName>
    <alternativeName>
        <fullName>RNA-binding motif protein 32</fullName>
    </alternativeName>
    <alternativeName>
        <fullName>RNA-binding protein 32</fullName>
    </alternativeName>
</protein>
<name>PAP1M_HUMAN</name>